<proteinExistence type="evidence at transcript level"/>
<accession>A0A384JP03</accession>
<keyword id="KW-1003">Cell membrane</keyword>
<keyword id="KW-0325">Glycoprotein</keyword>
<keyword id="KW-0472">Membrane</keyword>
<keyword id="KW-1185">Reference proteome</keyword>
<keyword id="KW-0677">Repeat</keyword>
<keyword id="KW-0812">Transmembrane</keyword>
<keyword id="KW-1133">Transmembrane helix</keyword>
<keyword id="KW-0813">Transport</keyword>
<evidence type="ECO:0000255" key="1"/>
<evidence type="ECO:0000255" key="2">
    <source>
        <dbReference type="PROSITE-ProRule" id="PRU00498"/>
    </source>
</evidence>
<evidence type="ECO:0000256" key="3">
    <source>
        <dbReference type="SAM" id="MobiDB-lite"/>
    </source>
</evidence>
<evidence type="ECO:0000269" key="4">
    <source>
    </source>
</evidence>
<evidence type="ECO:0000303" key="5">
    <source>
    </source>
</evidence>
<evidence type="ECO:0000305" key="6"/>
<evidence type="ECO:0000305" key="7">
    <source>
    </source>
</evidence>
<feature type="chain" id="PRO_0000457446" description="Aquaporin-8">
    <location>
        <begin position="1"/>
        <end position="325"/>
    </location>
</feature>
<feature type="topological domain" description="Cytoplasmic" evidence="6">
    <location>
        <begin position="1"/>
        <end position="10"/>
    </location>
</feature>
<feature type="transmembrane region" description="Helical" evidence="1">
    <location>
        <begin position="11"/>
        <end position="31"/>
    </location>
</feature>
<feature type="topological domain" description="Extracellular" evidence="6">
    <location>
        <begin position="32"/>
        <end position="52"/>
    </location>
</feature>
<feature type="transmembrane region" description="Helical" evidence="1">
    <location>
        <begin position="53"/>
        <end position="73"/>
    </location>
</feature>
<feature type="topological domain" description="Cytoplasmic" evidence="6">
    <location>
        <begin position="74"/>
        <end position="100"/>
    </location>
</feature>
<feature type="transmembrane region" description="Helical" evidence="1">
    <location>
        <begin position="101"/>
        <end position="121"/>
    </location>
</feature>
<feature type="topological domain" description="Extracellular" evidence="6">
    <location>
        <begin position="122"/>
        <end position="140"/>
    </location>
</feature>
<feature type="transmembrane region" description="Helical" evidence="1">
    <location>
        <begin position="141"/>
        <end position="161"/>
    </location>
</feature>
<feature type="topological domain" description="Cytoplasmic" evidence="6">
    <location>
        <begin position="162"/>
        <end position="167"/>
    </location>
</feature>
<feature type="transmembrane region" description="Helical" evidence="1">
    <location>
        <begin position="168"/>
        <end position="188"/>
    </location>
</feature>
<feature type="topological domain" description="Extracellular" evidence="6">
    <location>
        <begin position="189"/>
        <end position="212"/>
    </location>
</feature>
<feature type="transmembrane region" description="Helical" evidence="1">
    <location>
        <begin position="213"/>
        <end position="233"/>
    </location>
</feature>
<feature type="topological domain" description="Cytoplasmic" evidence="6">
    <location>
        <begin position="234"/>
        <end position="325"/>
    </location>
</feature>
<feature type="region of interest" description="Disordered" evidence="3">
    <location>
        <begin position="279"/>
        <end position="298"/>
    </location>
</feature>
<feature type="region of interest" description="Disordered" evidence="3">
    <location>
        <begin position="305"/>
        <end position="325"/>
    </location>
</feature>
<feature type="short sequence motif" description="NPA 1" evidence="7">
    <location>
        <begin position="81"/>
        <end position="83"/>
    </location>
</feature>
<feature type="short sequence motif" description="NPA 2" evidence="7">
    <location>
        <begin position="194"/>
        <end position="196"/>
    </location>
</feature>
<feature type="compositionally biased region" description="Basic and acidic residues" evidence="3">
    <location>
        <begin position="286"/>
        <end position="298"/>
    </location>
</feature>
<feature type="glycosylation site" description="N-linked (GlcNAc...) asparagine" evidence="2">
    <location>
        <position position="39"/>
    </location>
</feature>
<feature type="glycosylation site" description="N-linked (GlcNAc...) asparagine" evidence="2">
    <location>
        <position position="47"/>
    </location>
</feature>
<protein>
    <recommendedName>
        <fullName evidence="5">Aquaporin-8</fullName>
    </recommendedName>
</protein>
<organism>
    <name type="scientific">Botryotinia fuckeliana (strain B05.10)</name>
    <name type="common">Noble rot fungus</name>
    <name type="synonym">Botrytis cinerea</name>
    <dbReference type="NCBI Taxonomy" id="332648"/>
    <lineage>
        <taxon>Eukaryota</taxon>
        <taxon>Fungi</taxon>
        <taxon>Dikarya</taxon>
        <taxon>Ascomycota</taxon>
        <taxon>Pezizomycotina</taxon>
        <taxon>Leotiomycetes</taxon>
        <taxon>Helotiales</taxon>
        <taxon>Sclerotiniaceae</taxon>
        <taxon>Botrytis</taxon>
    </lineage>
</organism>
<comment type="function">
    <text evidence="4">Plasma membrane water channel that regulates the reactive oxygen species (ROS)-signaling pathway through its capacity to act as a membrane channel for hydrogen peroxide uptake (PubMed:26527167). Required for the formation of infection structures and infection, especially on host leaves where it is essential for the penetration into the host (PubMed:26527167). Regulates the expression of proteins related to redox-regulation and intracellular signal transduction and plays a role in the distribution of mitochondria in the hyphae (PubMed:26527167).</text>
</comment>
<comment type="catalytic activity">
    <reaction evidence="4">
        <text>H2O2(out) = H2O2(in)</text>
        <dbReference type="Rhea" id="RHEA:74375"/>
        <dbReference type="ChEBI" id="CHEBI:16240"/>
    </reaction>
</comment>
<comment type="catalytic activity">
    <reaction evidence="7">
        <text>H2O(in) = H2O(out)</text>
        <dbReference type="Rhea" id="RHEA:29667"/>
        <dbReference type="ChEBI" id="CHEBI:15377"/>
    </reaction>
</comment>
<comment type="subcellular location">
    <subcellularLocation>
        <location evidence="4">Cell membrane</location>
        <topology evidence="1">Multi-pass membrane protein</topology>
    </subcellularLocation>
</comment>
<comment type="induction">
    <text evidence="4">Expression is higher in vegetative hyphae than in conidia and infection structures.</text>
</comment>
<comment type="domain">
    <text evidence="7">Aquaporins contain two tandem repeats each containing three membrane-spanning domains and a pore-forming loop with the signature motif Asn-Pro-Ala (NPA).</text>
</comment>
<comment type="disruption phenotype">
    <text evidence="4">Completely inhibits the development of conidia and infection structures, and significantly affects noxR expression (PubMed:26527167). Leads to the loss of its ability to cause disease on tomato leaves, whereas it can still cause lesions on both tomato and strawberry fruits, but the diameter of the lesion is significantly reduced (PubMed:26527167).</text>
</comment>
<comment type="similarity">
    <text evidence="6">Belongs to the MIP/aquaporin (TC 1.A.8) family.</text>
</comment>
<dbReference type="EMBL" id="CP009812">
    <property type="protein sequence ID" value="ATZ52240.1"/>
    <property type="molecule type" value="Genomic_DNA"/>
</dbReference>
<dbReference type="SMR" id="A0A384JP03"/>
<dbReference type="EnsemblFungi" id="Bcin08g00120.1">
    <property type="protein sequence ID" value="Bcin08p00120.1"/>
    <property type="gene ID" value="Bcin08g00120"/>
</dbReference>
<dbReference type="KEGG" id="bfu:BCIN_08g00120"/>
<dbReference type="VEuPathDB" id="FungiDB:Bcin08g00120"/>
<dbReference type="OMA" id="IFWTGAG"/>
<dbReference type="OrthoDB" id="3222at2759"/>
<dbReference type="Proteomes" id="UP000001798">
    <property type="component" value="Chromosome bcin08"/>
</dbReference>
<dbReference type="GO" id="GO:0005886">
    <property type="term" value="C:plasma membrane"/>
    <property type="evidence" value="ECO:0007669"/>
    <property type="project" value="UniProtKB-SubCell"/>
</dbReference>
<dbReference type="GO" id="GO:0015250">
    <property type="term" value="F:water channel activity"/>
    <property type="evidence" value="ECO:0007669"/>
    <property type="project" value="TreeGrafter"/>
</dbReference>
<dbReference type="FunFam" id="1.20.1080.10:FF:000014">
    <property type="entry name" value="Aquaporin 1"/>
    <property type="match status" value="1"/>
</dbReference>
<dbReference type="Gene3D" id="1.20.1080.10">
    <property type="entry name" value="Glycerol uptake facilitator protein"/>
    <property type="match status" value="1"/>
</dbReference>
<dbReference type="InterPro" id="IPR023271">
    <property type="entry name" value="Aquaporin-like"/>
</dbReference>
<dbReference type="InterPro" id="IPR034294">
    <property type="entry name" value="Aquaporin_transptr"/>
</dbReference>
<dbReference type="InterPro" id="IPR000425">
    <property type="entry name" value="MIP"/>
</dbReference>
<dbReference type="InterPro" id="IPR022357">
    <property type="entry name" value="MIP_CS"/>
</dbReference>
<dbReference type="PANTHER" id="PTHR19139">
    <property type="entry name" value="AQUAPORIN TRANSPORTER"/>
    <property type="match status" value="1"/>
</dbReference>
<dbReference type="PANTHER" id="PTHR19139:SF199">
    <property type="entry name" value="MIP17260P"/>
    <property type="match status" value="1"/>
</dbReference>
<dbReference type="Pfam" id="PF00230">
    <property type="entry name" value="MIP"/>
    <property type="match status" value="1"/>
</dbReference>
<dbReference type="PRINTS" id="PR00783">
    <property type="entry name" value="MINTRINSICP"/>
</dbReference>
<dbReference type="SUPFAM" id="SSF81338">
    <property type="entry name" value="Aquaporin-like"/>
    <property type="match status" value="1"/>
</dbReference>
<dbReference type="PROSITE" id="PS00221">
    <property type="entry name" value="MIP"/>
    <property type="match status" value="1"/>
</dbReference>
<name>AQP8_BOTFB</name>
<reference key="1">
    <citation type="journal article" date="2011" name="PLoS Genet.">
        <title>Genomic analysis of the necrotrophic fungal pathogens Sclerotinia sclerotiorum and Botrytis cinerea.</title>
        <authorList>
            <person name="Amselem J."/>
            <person name="Cuomo C.A."/>
            <person name="van Kan J.A.L."/>
            <person name="Viaud M."/>
            <person name="Benito E.P."/>
            <person name="Couloux A."/>
            <person name="Coutinho P.M."/>
            <person name="de Vries R.P."/>
            <person name="Dyer P.S."/>
            <person name="Fillinger S."/>
            <person name="Fournier E."/>
            <person name="Gout L."/>
            <person name="Hahn M."/>
            <person name="Kohn L."/>
            <person name="Lapalu N."/>
            <person name="Plummer K.M."/>
            <person name="Pradier J.-M."/>
            <person name="Quevillon E."/>
            <person name="Sharon A."/>
            <person name="Simon A."/>
            <person name="ten Have A."/>
            <person name="Tudzynski B."/>
            <person name="Tudzynski P."/>
            <person name="Wincker P."/>
            <person name="Andrew M."/>
            <person name="Anthouard V."/>
            <person name="Beever R.E."/>
            <person name="Beffa R."/>
            <person name="Benoit I."/>
            <person name="Bouzid O."/>
            <person name="Brault B."/>
            <person name="Chen Z."/>
            <person name="Choquer M."/>
            <person name="Collemare J."/>
            <person name="Cotton P."/>
            <person name="Danchin E.G."/>
            <person name="Da Silva C."/>
            <person name="Gautier A."/>
            <person name="Giraud C."/>
            <person name="Giraud T."/>
            <person name="Gonzalez C."/>
            <person name="Grossetete S."/>
            <person name="Gueldener U."/>
            <person name="Henrissat B."/>
            <person name="Howlett B.J."/>
            <person name="Kodira C."/>
            <person name="Kretschmer M."/>
            <person name="Lappartient A."/>
            <person name="Leroch M."/>
            <person name="Levis C."/>
            <person name="Mauceli E."/>
            <person name="Neuveglise C."/>
            <person name="Oeser B."/>
            <person name="Pearson M."/>
            <person name="Poulain J."/>
            <person name="Poussereau N."/>
            <person name="Quesneville H."/>
            <person name="Rascle C."/>
            <person name="Schumacher J."/>
            <person name="Segurens B."/>
            <person name="Sexton A."/>
            <person name="Silva E."/>
            <person name="Sirven C."/>
            <person name="Soanes D.M."/>
            <person name="Talbot N.J."/>
            <person name="Templeton M."/>
            <person name="Yandava C."/>
            <person name="Yarden O."/>
            <person name="Zeng Q."/>
            <person name="Rollins J.A."/>
            <person name="Lebrun M.-H."/>
            <person name="Dickman M."/>
        </authorList>
    </citation>
    <scope>NUCLEOTIDE SEQUENCE [LARGE SCALE GENOMIC DNA]</scope>
    <source>
        <strain>B05.10</strain>
    </source>
</reference>
<reference key="2">
    <citation type="journal article" date="2012" name="Eukaryot. Cell">
        <title>Genome update of Botrytis cinerea strains B05.10 and T4.</title>
        <authorList>
            <person name="Staats M."/>
            <person name="van Kan J.A.L."/>
        </authorList>
    </citation>
    <scope>NUCLEOTIDE SEQUENCE [LARGE SCALE GENOMIC DNA]</scope>
    <source>
        <strain>B05.10</strain>
    </source>
</reference>
<reference key="3">
    <citation type="journal article" date="2017" name="Mol. Plant Pathol.">
        <title>A gapless genome sequence of the fungus Botrytis cinerea.</title>
        <authorList>
            <person name="van Kan J.A.L."/>
            <person name="Stassen J.H.M."/>
            <person name="Mosbach A."/>
            <person name="van der Lee T.A.J."/>
            <person name="Faino L."/>
            <person name="Farmer A.D."/>
            <person name="Papasotiriou D.G."/>
            <person name="Zhou S."/>
            <person name="Seidl M.F."/>
            <person name="Cottam E."/>
            <person name="Edel D."/>
            <person name="Hahn M."/>
            <person name="Schwartz D.C."/>
            <person name="Dietrich R.A."/>
            <person name="Widdison S."/>
            <person name="Scalliet G."/>
        </authorList>
    </citation>
    <scope>NUCLEOTIDE SEQUENCE [LARGE SCALE GENOMIC DNA]</scope>
    <source>
        <strain>B05.10</strain>
    </source>
</reference>
<reference key="4">
    <citation type="journal article" date="2016" name="New Phytol.">
        <title>Aquaporin8 regulates cellular development and reactive oxygen species production, a critical component of virulence in Botrytis cinerea.</title>
        <authorList>
            <person name="An B."/>
            <person name="Li B."/>
            <person name="Li H."/>
            <person name="Zhang Z."/>
            <person name="Qin G."/>
            <person name="Tian S."/>
        </authorList>
    </citation>
    <scope>FUNCTION</scope>
    <scope>DISRUPTION PHENOTYPE</scope>
    <scope>SUBCELLULAR LOCATION</scope>
    <scope>DOMAIN</scope>
    <scope>INDUCTION</scope>
    <scope>TRANSPORTER ACTIVITY</scope>
</reference>
<sequence length="325" mass="34592">MALRSPARDYLVSMIGELVGTFLFLFFAFAAAQTANQPNGTKPLTPNATDTSKLLYIALAFGASLAANVWVFFRVSGGQFNPAVTLALVLIRAVSPTKALILIPAQLVGGSLAAAAVKGIIPGDDILFAVSLGPGVANVQGLFIELLLTFMLVFTILMLVAEKTKSTFVAPIGIGFSLFIGHLVGIFWTGAGINPARAFSPALIQASFPSYHWIYWLGPALGSFLAAGLYLGLKEMKYELVGGDADKEKREEGLTVQQADLIIETLRGLPRAIQGSGALGQFEGTTEGHRSPVDLERGAEVRILEDDPHIRKSRYGSPDSTDLPT</sequence>
<gene>
    <name evidence="5" type="primary">AQP8</name>
    <name type="ORF">BCIN_08g00120</name>
</gene>